<sequence>MRTNPTTSDPAVSIREKNNLGRIAQIIGPVLDVAFPPGKMPNIYNALVVKGRDTLGQEINVTCEVQQLLGNNRVRAVAMSATEGLKRGMDVVDMGNPLSVPVGGATLGRIFNVLGEPVDNLGPVDTSTTSPIHKSAPAFIQLDTKLSIFETGIKVVDLLAPYRRGGKIGLFGGAGVGKTSLIMELINNIAKAHGGVSVFGGVGERTREGNDLYKEMKESGVINELNLAESKVALVYGQMNEPPGARMRVGLTALTMAEYFRDVNKQDVLLFIDNIFRFVQAGSEVSALLGRMPSAVGYQPTLSTEMGTLQERITSTKKGSITSIQAVYVPADDLTDPAPATTFAHLDATTVLSRGLAAKGIYPAVDPLDSTSTMLQPRIVGEEHYETAQQVKQTLQRYKELQDIIAILGLDELSEEDRLTVARARKIERFLSQPFFVAEVFTGSPGKYVGLAETIRGFKLILSGEFDSLPEQAFYLVGNIDEATAKATNLEMESKLKK</sequence>
<organism>
    <name type="scientific">Raphanus sativus</name>
    <name type="common">Radish</name>
    <name type="synonym">Raphanus raphanistrum var. sativus</name>
    <dbReference type="NCBI Taxonomy" id="3726"/>
    <lineage>
        <taxon>Eukaryota</taxon>
        <taxon>Viridiplantae</taxon>
        <taxon>Streptophyta</taxon>
        <taxon>Embryophyta</taxon>
        <taxon>Tracheophyta</taxon>
        <taxon>Spermatophyta</taxon>
        <taxon>Magnoliopsida</taxon>
        <taxon>eudicotyledons</taxon>
        <taxon>Gunneridae</taxon>
        <taxon>Pentapetalae</taxon>
        <taxon>rosids</taxon>
        <taxon>malvids</taxon>
        <taxon>Brassicales</taxon>
        <taxon>Brassicaceae</taxon>
        <taxon>Brassiceae</taxon>
        <taxon>Raphanus</taxon>
    </lineage>
</organism>
<feature type="chain" id="PRO_0000144548" description="ATP synthase subunit beta, chloroplastic">
    <location>
        <begin position="1"/>
        <end position="498"/>
    </location>
</feature>
<feature type="binding site" evidence="2">
    <location>
        <begin position="172"/>
        <end position="179"/>
    </location>
    <ligand>
        <name>ATP</name>
        <dbReference type="ChEBI" id="CHEBI:30616"/>
    </ligand>
</feature>
<feature type="modified residue" description="Phosphothreonine" evidence="1">
    <location>
        <position position="6"/>
    </location>
</feature>
<feature type="modified residue" description="Phosphoserine" evidence="1">
    <location>
        <position position="13"/>
    </location>
</feature>
<protein>
    <recommendedName>
        <fullName evidence="2">ATP synthase subunit beta, chloroplastic</fullName>
        <ecNumber evidence="2">7.1.2.2</ecNumber>
    </recommendedName>
    <alternativeName>
        <fullName evidence="2">ATP synthase F1 sector subunit beta</fullName>
    </alternativeName>
    <alternativeName>
        <fullName evidence="2">F-ATPase subunit beta</fullName>
    </alternativeName>
</protein>
<comment type="function">
    <text evidence="2">Produces ATP from ADP in the presence of a proton gradient across the membrane. The catalytic sites are hosted primarily by the beta subunits.</text>
</comment>
<comment type="catalytic activity">
    <reaction evidence="2">
        <text>ATP + H2O + 4 H(+)(in) = ADP + phosphate + 5 H(+)(out)</text>
        <dbReference type="Rhea" id="RHEA:57720"/>
        <dbReference type="ChEBI" id="CHEBI:15377"/>
        <dbReference type="ChEBI" id="CHEBI:15378"/>
        <dbReference type="ChEBI" id="CHEBI:30616"/>
        <dbReference type="ChEBI" id="CHEBI:43474"/>
        <dbReference type="ChEBI" id="CHEBI:456216"/>
        <dbReference type="EC" id="7.1.2.2"/>
    </reaction>
</comment>
<comment type="subunit">
    <text evidence="2">F-type ATPases have 2 components, CF(1) - the catalytic core - and CF(0) - the membrane proton channel. CF(1) has five subunits: alpha(3), beta(3), gamma(1), delta(1), epsilon(1). CF(0) has four main subunits: a(1), b(1), b'(1) and c(9-12).</text>
</comment>
<comment type="subcellular location">
    <subcellularLocation>
        <location evidence="2">Plastid</location>
        <location evidence="2">Chloroplast thylakoid membrane</location>
        <topology evidence="2">Peripheral membrane protein</topology>
    </subcellularLocation>
</comment>
<comment type="similarity">
    <text evidence="2">Belongs to the ATPase alpha/beta chains family.</text>
</comment>
<keyword id="KW-0066">ATP synthesis</keyword>
<keyword id="KW-0067">ATP-binding</keyword>
<keyword id="KW-0139">CF(1)</keyword>
<keyword id="KW-0150">Chloroplast</keyword>
<keyword id="KW-0375">Hydrogen ion transport</keyword>
<keyword id="KW-0406">Ion transport</keyword>
<keyword id="KW-0472">Membrane</keyword>
<keyword id="KW-0547">Nucleotide-binding</keyword>
<keyword id="KW-0597">Phosphoprotein</keyword>
<keyword id="KW-0934">Plastid</keyword>
<keyword id="KW-1185">Reference proteome</keyword>
<keyword id="KW-0793">Thylakoid</keyword>
<keyword id="KW-1278">Translocase</keyword>
<keyword id="KW-0813">Transport</keyword>
<dbReference type="EC" id="7.1.2.2" evidence="2"/>
<dbReference type="EMBL" id="AJ277564">
    <property type="protein sequence ID" value="CAB92327.1"/>
    <property type="molecule type" value="mRNA"/>
</dbReference>
<dbReference type="SMR" id="Q9MTG8"/>
<dbReference type="Proteomes" id="UP000504610">
    <property type="component" value="Unplaced"/>
</dbReference>
<dbReference type="GO" id="GO:0009535">
    <property type="term" value="C:chloroplast thylakoid membrane"/>
    <property type="evidence" value="ECO:0007669"/>
    <property type="project" value="UniProtKB-SubCell"/>
</dbReference>
<dbReference type="GO" id="GO:0005739">
    <property type="term" value="C:mitochondrion"/>
    <property type="evidence" value="ECO:0007669"/>
    <property type="project" value="GOC"/>
</dbReference>
<dbReference type="GO" id="GO:0045259">
    <property type="term" value="C:proton-transporting ATP synthase complex"/>
    <property type="evidence" value="ECO:0007669"/>
    <property type="project" value="UniProtKB-KW"/>
</dbReference>
<dbReference type="GO" id="GO:0005524">
    <property type="term" value="F:ATP binding"/>
    <property type="evidence" value="ECO:0007669"/>
    <property type="project" value="UniProtKB-UniRule"/>
</dbReference>
<dbReference type="GO" id="GO:0016887">
    <property type="term" value="F:ATP hydrolysis activity"/>
    <property type="evidence" value="ECO:0007669"/>
    <property type="project" value="InterPro"/>
</dbReference>
<dbReference type="GO" id="GO:0046933">
    <property type="term" value="F:proton-transporting ATP synthase activity, rotational mechanism"/>
    <property type="evidence" value="ECO:0007669"/>
    <property type="project" value="UniProtKB-UniRule"/>
</dbReference>
<dbReference type="GO" id="GO:0042776">
    <property type="term" value="P:proton motive force-driven mitochondrial ATP synthesis"/>
    <property type="evidence" value="ECO:0007669"/>
    <property type="project" value="TreeGrafter"/>
</dbReference>
<dbReference type="CDD" id="cd18110">
    <property type="entry name" value="ATP-synt_F1_beta_C"/>
    <property type="match status" value="1"/>
</dbReference>
<dbReference type="CDD" id="cd18115">
    <property type="entry name" value="ATP-synt_F1_beta_N"/>
    <property type="match status" value="1"/>
</dbReference>
<dbReference type="CDD" id="cd01133">
    <property type="entry name" value="F1-ATPase_beta_CD"/>
    <property type="match status" value="1"/>
</dbReference>
<dbReference type="FunFam" id="1.10.1140.10:FF:000001">
    <property type="entry name" value="ATP synthase subunit beta"/>
    <property type="match status" value="1"/>
</dbReference>
<dbReference type="FunFam" id="3.40.50.12240:FF:000006">
    <property type="entry name" value="ATP synthase subunit beta"/>
    <property type="match status" value="1"/>
</dbReference>
<dbReference type="FunFam" id="3.40.50.300:FF:000026">
    <property type="entry name" value="ATP synthase subunit beta"/>
    <property type="match status" value="1"/>
</dbReference>
<dbReference type="FunFam" id="2.40.10.170:FF:000002">
    <property type="entry name" value="ATP synthase subunit beta, chloroplastic"/>
    <property type="match status" value="1"/>
</dbReference>
<dbReference type="Gene3D" id="2.40.10.170">
    <property type="match status" value="1"/>
</dbReference>
<dbReference type="Gene3D" id="1.10.1140.10">
    <property type="entry name" value="Bovine Mitochondrial F1-atpase, Atp Synthase Beta Chain, Chain D, domain 3"/>
    <property type="match status" value="1"/>
</dbReference>
<dbReference type="Gene3D" id="3.40.50.300">
    <property type="entry name" value="P-loop containing nucleotide triphosphate hydrolases"/>
    <property type="match status" value="1"/>
</dbReference>
<dbReference type="HAMAP" id="MF_01347">
    <property type="entry name" value="ATP_synth_beta_bact"/>
    <property type="match status" value="1"/>
</dbReference>
<dbReference type="InterPro" id="IPR003593">
    <property type="entry name" value="AAA+_ATPase"/>
</dbReference>
<dbReference type="InterPro" id="IPR055190">
    <property type="entry name" value="ATP-synt_VA_C"/>
</dbReference>
<dbReference type="InterPro" id="IPR005722">
    <property type="entry name" value="ATP_synth_F1_bsu"/>
</dbReference>
<dbReference type="InterPro" id="IPR020003">
    <property type="entry name" value="ATPase_a/bsu_AS"/>
</dbReference>
<dbReference type="InterPro" id="IPR050053">
    <property type="entry name" value="ATPase_alpha/beta_chains"/>
</dbReference>
<dbReference type="InterPro" id="IPR004100">
    <property type="entry name" value="ATPase_F1/V1/A1_a/bsu_N"/>
</dbReference>
<dbReference type="InterPro" id="IPR036121">
    <property type="entry name" value="ATPase_F1/V1/A1_a/bsu_N_sf"/>
</dbReference>
<dbReference type="InterPro" id="IPR000194">
    <property type="entry name" value="ATPase_F1/V1/A1_a/bsu_nucl-bd"/>
</dbReference>
<dbReference type="InterPro" id="IPR024034">
    <property type="entry name" value="ATPase_F1/V1_b/a_C"/>
</dbReference>
<dbReference type="InterPro" id="IPR027417">
    <property type="entry name" value="P-loop_NTPase"/>
</dbReference>
<dbReference type="NCBIfam" id="TIGR01039">
    <property type="entry name" value="atpD"/>
    <property type="match status" value="1"/>
</dbReference>
<dbReference type="PANTHER" id="PTHR15184">
    <property type="entry name" value="ATP SYNTHASE"/>
    <property type="match status" value="1"/>
</dbReference>
<dbReference type="PANTHER" id="PTHR15184:SF71">
    <property type="entry name" value="ATP SYNTHASE SUBUNIT BETA, MITOCHONDRIAL"/>
    <property type="match status" value="1"/>
</dbReference>
<dbReference type="Pfam" id="PF00006">
    <property type="entry name" value="ATP-synt_ab"/>
    <property type="match status" value="1"/>
</dbReference>
<dbReference type="Pfam" id="PF02874">
    <property type="entry name" value="ATP-synt_ab_N"/>
    <property type="match status" value="1"/>
</dbReference>
<dbReference type="Pfam" id="PF22919">
    <property type="entry name" value="ATP-synt_VA_C"/>
    <property type="match status" value="1"/>
</dbReference>
<dbReference type="SMART" id="SM00382">
    <property type="entry name" value="AAA"/>
    <property type="match status" value="1"/>
</dbReference>
<dbReference type="SUPFAM" id="SSF47917">
    <property type="entry name" value="C-terminal domain of alpha and beta subunits of F1 ATP synthase"/>
    <property type="match status" value="1"/>
</dbReference>
<dbReference type="SUPFAM" id="SSF50615">
    <property type="entry name" value="N-terminal domain of alpha and beta subunits of F1 ATP synthase"/>
    <property type="match status" value="1"/>
</dbReference>
<dbReference type="SUPFAM" id="SSF52540">
    <property type="entry name" value="P-loop containing nucleoside triphosphate hydrolases"/>
    <property type="match status" value="1"/>
</dbReference>
<dbReference type="PROSITE" id="PS00152">
    <property type="entry name" value="ATPASE_ALPHA_BETA"/>
    <property type="match status" value="1"/>
</dbReference>
<evidence type="ECO:0000250" key="1">
    <source>
        <dbReference type="UniProtKB" id="P19366"/>
    </source>
</evidence>
<evidence type="ECO:0000255" key="2">
    <source>
        <dbReference type="HAMAP-Rule" id="MF_01347"/>
    </source>
</evidence>
<reference key="1">
    <citation type="submission" date="2000-04" db="EMBL/GenBank/DDBJ databases">
        <title>Molecular cloning and characterization of a cDNA encoding Raphanus sativus chloroplast ATPase beta subunit.</title>
        <authorList>
            <person name="Li W."/>
            <person name="Liu J."/>
        </authorList>
    </citation>
    <scope>NUCLEOTIDE SEQUENCE [MRNA]</scope>
    <source>
        <tissue>Leaf</tissue>
    </source>
</reference>
<geneLocation type="chloroplast"/>
<accession>Q9MTG8</accession>
<gene>
    <name evidence="2" type="primary">atpB</name>
</gene>
<proteinExistence type="evidence at transcript level"/>
<name>ATPB_RAPSA</name>